<proteinExistence type="inferred from homology"/>
<reference key="1">
    <citation type="journal article" date="1995" name="Bot. Acta">
        <title>Molecular phylogeny of the Papilionoideae (family Leguminosae): rbcL sequences versus chemical taxonomy.</title>
        <authorList>
            <person name="Kaess E."/>
            <person name="Wink M."/>
        </authorList>
    </citation>
    <scope>NUCLEOTIDE SEQUENCE [GENOMIC DNA]</scope>
    <source>
        <tissue>Leaf</tissue>
    </source>
</reference>
<evidence type="ECO:0000255" key="1">
    <source>
        <dbReference type="HAMAP-Rule" id="MF_01338"/>
    </source>
</evidence>
<organism>
    <name type="scientific">Lupinus microcarpus</name>
    <name type="common">Chick lupine</name>
    <dbReference type="NCBI Taxonomy" id="53231"/>
    <lineage>
        <taxon>Eukaryota</taxon>
        <taxon>Viridiplantae</taxon>
        <taxon>Streptophyta</taxon>
        <taxon>Embryophyta</taxon>
        <taxon>Tracheophyta</taxon>
        <taxon>Spermatophyta</taxon>
        <taxon>Magnoliopsida</taxon>
        <taxon>eudicotyledons</taxon>
        <taxon>Gunneridae</taxon>
        <taxon>Pentapetalae</taxon>
        <taxon>rosids</taxon>
        <taxon>fabids</taxon>
        <taxon>Fabales</taxon>
        <taxon>Fabaceae</taxon>
        <taxon>Papilionoideae</taxon>
        <taxon>50 kb inversion clade</taxon>
        <taxon>genistoids sensu lato</taxon>
        <taxon>core genistoids</taxon>
        <taxon>Genisteae</taxon>
        <taxon>Lupinus</taxon>
    </lineage>
</organism>
<name>RBL_LUPMI</name>
<geneLocation type="chloroplast"/>
<dbReference type="EC" id="4.1.1.39" evidence="1"/>
<dbReference type="EMBL" id="Z70063">
    <property type="protein sequence ID" value="CAA93922.1"/>
    <property type="molecule type" value="Genomic_DNA"/>
</dbReference>
<dbReference type="SMR" id="P92406"/>
<dbReference type="GO" id="GO:0009507">
    <property type="term" value="C:chloroplast"/>
    <property type="evidence" value="ECO:0007669"/>
    <property type="project" value="UniProtKB-SubCell"/>
</dbReference>
<dbReference type="GO" id="GO:0000287">
    <property type="term" value="F:magnesium ion binding"/>
    <property type="evidence" value="ECO:0007669"/>
    <property type="project" value="InterPro"/>
</dbReference>
<dbReference type="GO" id="GO:0004497">
    <property type="term" value="F:monooxygenase activity"/>
    <property type="evidence" value="ECO:0007669"/>
    <property type="project" value="UniProtKB-KW"/>
</dbReference>
<dbReference type="GO" id="GO:0016984">
    <property type="term" value="F:ribulose-bisphosphate carboxylase activity"/>
    <property type="evidence" value="ECO:0007669"/>
    <property type="project" value="UniProtKB-EC"/>
</dbReference>
<dbReference type="GO" id="GO:0009853">
    <property type="term" value="P:photorespiration"/>
    <property type="evidence" value="ECO:0007669"/>
    <property type="project" value="UniProtKB-KW"/>
</dbReference>
<dbReference type="GO" id="GO:0019253">
    <property type="term" value="P:reductive pentose-phosphate cycle"/>
    <property type="evidence" value="ECO:0007669"/>
    <property type="project" value="UniProtKB-KW"/>
</dbReference>
<dbReference type="CDD" id="cd08212">
    <property type="entry name" value="RuBisCO_large_I"/>
    <property type="match status" value="1"/>
</dbReference>
<dbReference type="FunFam" id="3.20.20.110:FF:000001">
    <property type="entry name" value="Ribulose bisphosphate carboxylase large chain"/>
    <property type="match status" value="1"/>
</dbReference>
<dbReference type="FunFam" id="3.30.70.150:FF:000001">
    <property type="entry name" value="Ribulose bisphosphate carboxylase large chain"/>
    <property type="match status" value="1"/>
</dbReference>
<dbReference type="Gene3D" id="3.20.20.110">
    <property type="entry name" value="Ribulose bisphosphate carboxylase, large subunit, C-terminal domain"/>
    <property type="match status" value="1"/>
</dbReference>
<dbReference type="Gene3D" id="3.30.70.150">
    <property type="entry name" value="RuBisCO large subunit, N-terminal domain"/>
    <property type="match status" value="1"/>
</dbReference>
<dbReference type="HAMAP" id="MF_01338">
    <property type="entry name" value="RuBisCO_L_type1"/>
    <property type="match status" value="1"/>
</dbReference>
<dbReference type="InterPro" id="IPR033966">
    <property type="entry name" value="RuBisCO"/>
</dbReference>
<dbReference type="InterPro" id="IPR020878">
    <property type="entry name" value="RuBisCo_large_chain_AS"/>
</dbReference>
<dbReference type="InterPro" id="IPR000685">
    <property type="entry name" value="RuBisCO_lsu_C"/>
</dbReference>
<dbReference type="InterPro" id="IPR036376">
    <property type="entry name" value="RuBisCO_lsu_C_sf"/>
</dbReference>
<dbReference type="InterPro" id="IPR017443">
    <property type="entry name" value="RuBisCO_lsu_fd_N"/>
</dbReference>
<dbReference type="InterPro" id="IPR036422">
    <property type="entry name" value="RuBisCO_lsu_N_sf"/>
</dbReference>
<dbReference type="InterPro" id="IPR020888">
    <property type="entry name" value="RuBisCO_lsuI"/>
</dbReference>
<dbReference type="NCBIfam" id="NF003252">
    <property type="entry name" value="PRK04208.1"/>
    <property type="match status" value="1"/>
</dbReference>
<dbReference type="PANTHER" id="PTHR42704">
    <property type="entry name" value="RIBULOSE BISPHOSPHATE CARBOXYLASE"/>
    <property type="match status" value="1"/>
</dbReference>
<dbReference type="PANTHER" id="PTHR42704:SF16">
    <property type="entry name" value="RIBULOSE BISPHOSPHATE CARBOXYLASE LARGE CHAIN"/>
    <property type="match status" value="1"/>
</dbReference>
<dbReference type="Pfam" id="PF00016">
    <property type="entry name" value="RuBisCO_large"/>
    <property type="match status" value="1"/>
</dbReference>
<dbReference type="Pfam" id="PF02788">
    <property type="entry name" value="RuBisCO_large_N"/>
    <property type="match status" value="1"/>
</dbReference>
<dbReference type="SFLD" id="SFLDG01052">
    <property type="entry name" value="RuBisCO"/>
    <property type="match status" value="1"/>
</dbReference>
<dbReference type="SFLD" id="SFLDS00014">
    <property type="entry name" value="RuBisCO"/>
    <property type="match status" value="1"/>
</dbReference>
<dbReference type="SFLD" id="SFLDG00301">
    <property type="entry name" value="RuBisCO-like_proteins"/>
    <property type="match status" value="1"/>
</dbReference>
<dbReference type="SUPFAM" id="SSF51649">
    <property type="entry name" value="RuBisCo, C-terminal domain"/>
    <property type="match status" value="1"/>
</dbReference>
<dbReference type="SUPFAM" id="SSF54966">
    <property type="entry name" value="RuBisCO, large subunit, small (N-terminal) domain"/>
    <property type="match status" value="1"/>
</dbReference>
<dbReference type="PROSITE" id="PS00157">
    <property type="entry name" value="RUBISCO_LARGE"/>
    <property type="match status" value="1"/>
</dbReference>
<gene>
    <name evidence="1" type="primary">rbcL</name>
</gene>
<keyword id="KW-0113">Calvin cycle</keyword>
<keyword id="KW-0120">Carbon dioxide fixation</keyword>
<keyword id="KW-0150">Chloroplast</keyword>
<keyword id="KW-1015">Disulfide bond</keyword>
<keyword id="KW-0456">Lyase</keyword>
<keyword id="KW-0460">Magnesium</keyword>
<keyword id="KW-0479">Metal-binding</keyword>
<keyword id="KW-0488">Methylation</keyword>
<keyword id="KW-0503">Monooxygenase</keyword>
<keyword id="KW-0560">Oxidoreductase</keyword>
<keyword id="KW-0601">Photorespiration</keyword>
<keyword id="KW-0602">Photosynthesis</keyword>
<keyword id="KW-0934">Plastid</keyword>
<accession>P92406</accession>
<protein>
    <recommendedName>
        <fullName evidence="1">Ribulose bisphosphate carboxylase large chain</fullName>
        <shortName evidence="1">RuBisCO large subunit</shortName>
        <ecNumber evidence="1">4.1.1.39</ecNumber>
    </recommendedName>
</protein>
<sequence length="455" mass="50265">SVGFKAGVKDYKLTYYTPDNQTKDTDILAAFRVTPQPGVPPEEAGAAVAAESSTGTWTTVWTDGLTSLDRYKGRCYHIEPVAGEENQFIAYVAYPLDLFEEGSVTNMFTSIVGNVFGFKALRALRLEDLRIPNAYVKTFQGPPHGIQVERDKLNKYGRPLLGCTIKPKLGLSAKNYGRAVYECLRGGLDFTKDDENVNSQPFMRWRDRFLFCAEALYKAQAETGEIKGHYLNATAGTCEEMIKRAVFARELGVPIVMHDYITGGFTANTSLAHYCRDNGLLLHIHRAMHAVIDRQKNHGMHFRVLAKALRLSGGDHIHSGTVVGKLEGEREITLGFVDLLRDDFVEKDRSRGIYFTQDWVSLPGVLPVASGGIHVWHMPALTEIFGDDSVLQFGGGTLGHPWGNAPGAVANRVALEACVQARNEGRDLASEGNQIIREASKWSPELAAACEVWKE</sequence>
<feature type="chain" id="PRO_0000062520" description="Ribulose bisphosphate carboxylase large chain">
    <location>
        <begin position="1" status="less than"/>
        <end position="455" status="greater than"/>
    </location>
</feature>
<feature type="active site" description="Proton acceptor" evidence="1">
    <location>
        <position position="166"/>
    </location>
</feature>
<feature type="active site" description="Proton acceptor" evidence="1">
    <location>
        <position position="285"/>
    </location>
</feature>
<feature type="binding site" description="in homodimeric partner" evidence="1">
    <location>
        <position position="114"/>
    </location>
    <ligand>
        <name>substrate</name>
    </ligand>
</feature>
<feature type="binding site" evidence="1">
    <location>
        <position position="164"/>
    </location>
    <ligand>
        <name>substrate</name>
    </ligand>
</feature>
<feature type="binding site" evidence="1">
    <location>
        <position position="168"/>
    </location>
    <ligand>
        <name>substrate</name>
    </ligand>
</feature>
<feature type="binding site" description="via carbamate group" evidence="1">
    <location>
        <position position="192"/>
    </location>
    <ligand>
        <name>Mg(2+)</name>
        <dbReference type="ChEBI" id="CHEBI:18420"/>
    </ligand>
</feature>
<feature type="binding site" evidence="1">
    <location>
        <position position="194"/>
    </location>
    <ligand>
        <name>Mg(2+)</name>
        <dbReference type="ChEBI" id="CHEBI:18420"/>
    </ligand>
</feature>
<feature type="binding site" evidence="1">
    <location>
        <position position="195"/>
    </location>
    <ligand>
        <name>Mg(2+)</name>
        <dbReference type="ChEBI" id="CHEBI:18420"/>
    </ligand>
</feature>
<feature type="binding site" evidence="1">
    <location>
        <position position="286"/>
    </location>
    <ligand>
        <name>substrate</name>
    </ligand>
</feature>
<feature type="binding site" evidence="1">
    <location>
        <position position="318"/>
    </location>
    <ligand>
        <name>substrate</name>
    </ligand>
</feature>
<feature type="binding site" evidence="1">
    <location>
        <position position="370"/>
    </location>
    <ligand>
        <name>substrate</name>
    </ligand>
</feature>
<feature type="site" description="Transition state stabilizer" evidence="1">
    <location>
        <position position="325"/>
    </location>
</feature>
<feature type="modified residue" description="N6,N6,N6-trimethyllysine" evidence="1">
    <location>
        <position position="5"/>
    </location>
</feature>
<feature type="modified residue" description="N6-carboxylysine" evidence="1">
    <location>
        <position position="192"/>
    </location>
</feature>
<feature type="disulfide bond" description="Interchain; in linked form" evidence="1">
    <location>
        <position position="238"/>
    </location>
</feature>
<feature type="non-terminal residue">
    <location>
        <position position="1"/>
    </location>
</feature>
<feature type="non-terminal residue">
    <location>
        <position position="455"/>
    </location>
</feature>
<comment type="function">
    <text evidence="1">RuBisCO catalyzes two reactions: the carboxylation of D-ribulose 1,5-bisphosphate, the primary event in carbon dioxide fixation, as well as the oxidative fragmentation of the pentose substrate in the photorespiration process. Both reactions occur simultaneously and in competition at the same active site.</text>
</comment>
<comment type="catalytic activity">
    <reaction evidence="1">
        <text>2 (2R)-3-phosphoglycerate + 2 H(+) = D-ribulose 1,5-bisphosphate + CO2 + H2O</text>
        <dbReference type="Rhea" id="RHEA:23124"/>
        <dbReference type="ChEBI" id="CHEBI:15377"/>
        <dbReference type="ChEBI" id="CHEBI:15378"/>
        <dbReference type="ChEBI" id="CHEBI:16526"/>
        <dbReference type="ChEBI" id="CHEBI:57870"/>
        <dbReference type="ChEBI" id="CHEBI:58272"/>
        <dbReference type="EC" id="4.1.1.39"/>
    </reaction>
</comment>
<comment type="catalytic activity">
    <reaction evidence="1">
        <text>D-ribulose 1,5-bisphosphate + O2 = 2-phosphoglycolate + (2R)-3-phosphoglycerate + 2 H(+)</text>
        <dbReference type="Rhea" id="RHEA:36631"/>
        <dbReference type="ChEBI" id="CHEBI:15378"/>
        <dbReference type="ChEBI" id="CHEBI:15379"/>
        <dbReference type="ChEBI" id="CHEBI:57870"/>
        <dbReference type="ChEBI" id="CHEBI:58033"/>
        <dbReference type="ChEBI" id="CHEBI:58272"/>
    </reaction>
</comment>
<comment type="cofactor">
    <cofactor evidence="1">
        <name>Mg(2+)</name>
        <dbReference type="ChEBI" id="CHEBI:18420"/>
    </cofactor>
    <text evidence="1">Binds 1 Mg(2+) ion per subunit.</text>
</comment>
<comment type="subunit">
    <text evidence="1">Heterohexadecamer of 8 large chains and 8 small chains; disulfide-linked. The disulfide link is formed within the large subunit homodimers.</text>
</comment>
<comment type="subcellular location">
    <subcellularLocation>
        <location>Plastid</location>
        <location>Chloroplast</location>
    </subcellularLocation>
</comment>
<comment type="PTM">
    <text evidence="1">The disulfide bond which can form in the large chain dimeric partners within the hexadecamer appears to be associated with oxidative stress and protein turnover.</text>
</comment>
<comment type="miscellaneous">
    <text evidence="1">The basic functional RuBisCO is composed of a large chain homodimer in a 'head-to-tail' conformation. In form I RuBisCO this homodimer is arranged in a barrel-like tetramer with the small subunits forming a tetrameric 'cap' on each end of the 'barrel'.</text>
</comment>
<comment type="similarity">
    <text evidence="1">Belongs to the RuBisCO large chain family. Type I subfamily.</text>
</comment>